<gene>
    <name type="primary">EXO84</name>
    <name type="ordered locus">KLLA0E11319g</name>
</gene>
<dbReference type="EMBL" id="CR382125">
    <property type="protein sequence ID" value="CAG99548.1"/>
    <property type="molecule type" value="Genomic_DNA"/>
</dbReference>
<dbReference type="RefSeq" id="XP_454461.1">
    <property type="nucleotide sequence ID" value="XM_454461.1"/>
</dbReference>
<dbReference type="SMR" id="Q6CNM8"/>
<dbReference type="FunCoup" id="Q6CNM8">
    <property type="interactions" value="200"/>
</dbReference>
<dbReference type="STRING" id="284590.Q6CNM8"/>
<dbReference type="PaxDb" id="284590-Q6CNM8"/>
<dbReference type="KEGG" id="kla:KLLA0_E11353g"/>
<dbReference type="eggNOG" id="KOG2215">
    <property type="taxonomic scope" value="Eukaryota"/>
</dbReference>
<dbReference type="HOGENOM" id="CLU_014732_0_0_1"/>
<dbReference type="InParanoid" id="Q6CNM8"/>
<dbReference type="OMA" id="AAWLPNR"/>
<dbReference type="Proteomes" id="UP000000598">
    <property type="component" value="Chromosome E"/>
</dbReference>
<dbReference type="GO" id="GO:0000145">
    <property type="term" value="C:exocyst"/>
    <property type="evidence" value="ECO:0007669"/>
    <property type="project" value="InterPro"/>
</dbReference>
<dbReference type="GO" id="GO:0030133">
    <property type="term" value="C:transport vesicle"/>
    <property type="evidence" value="ECO:0007669"/>
    <property type="project" value="UniProtKB-SubCell"/>
</dbReference>
<dbReference type="GO" id="GO:0006887">
    <property type="term" value="P:exocytosis"/>
    <property type="evidence" value="ECO:0007669"/>
    <property type="project" value="UniProtKB-KW"/>
</dbReference>
<dbReference type="GO" id="GO:0006893">
    <property type="term" value="P:Golgi to plasma membrane transport"/>
    <property type="evidence" value="ECO:0007669"/>
    <property type="project" value="TreeGrafter"/>
</dbReference>
<dbReference type="GO" id="GO:0015031">
    <property type="term" value="P:protein transport"/>
    <property type="evidence" value="ECO:0007669"/>
    <property type="project" value="UniProtKB-KW"/>
</dbReference>
<dbReference type="CDD" id="cd01226">
    <property type="entry name" value="PH_RalBD_exo84"/>
    <property type="match status" value="1"/>
</dbReference>
<dbReference type="Gene3D" id="1.20.58.1220">
    <property type="entry name" value="Exo84p, C-terminal helical domain"/>
    <property type="match status" value="1"/>
</dbReference>
<dbReference type="Gene3D" id="1.20.58.1210">
    <property type="entry name" value="Exo84p, N-terminal helical domain"/>
    <property type="match status" value="1"/>
</dbReference>
<dbReference type="Gene3D" id="2.30.29.30">
    <property type="entry name" value="Pleckstrin-homology domain (PH domain)/Phosphotyrosine-binding domain (PTB)"/>
    <property type="match status" value="1"/>
</dbReference>
<dbReference type="InterPro" id="IPR016159">
    <property type="entry name" value="Cullin_repeat-like_dom_sf"/>
</dbReference>
<dbReference type="InterPro" id="IPR033961">
    <property type="entry name" value="Exo84"/>
</dbReference>
<dbReference type="InterPro" id="IPR032403">
    <property type="entry name" value="Exo84_C"/>
</dbReference>
<dbReference type="InterPro" id="IPR042561">
    <property type="entry name" value="Exo84_C_1"/>
</dbReference>
<dbReference type="InterPro" id="IPR042560">
    <property type="entry name" value="Exo84_C_2"/>
</dbReference>
<dbReference type="InterPro" id="IPR011993">
    <property type="entry name" value="PH-like_dom_sf"/>
</dbReference>
<dbReference type="PANTHER" id="PTHR21426">
    <property type="entry name" value="EXOCYST COMPLEX COMPONENT 8"/>
    <property type="match status" value="1"/>
</dbReference>
<dbReference type="PANTHER" id="PTHR21426:SF12">
    <property type="entry name" value="EXOCYST COMPLEX COMPONENT 8"/>
    <property type="match status" value="1"/>
</dbReference>
<dbReference type="Pfam" id="PF16528">
    <property type="entry name" value="Exo84_C"/>
    <property type="match status" value="1"/>
</dbReference>
<dbReference type="Pfam" id="PF25345">
    <property type="entry name" value="PH_EXO84"/>
    <property type="match status" value="1"/>
</dbReference>
<dbReference type="Pfam" id="PF08700">
    <property type="entry name" value="VPS51_Exo84_N"/>
    <property type="match status" value="1"/>
</dbReference>
<dbReference type="SUPFAM" id="SSF74788">
    <property type="entry name" value="Cullin repeat-like"/>
    <property type="match status" value="1"/>
</dbReference>
<dbReference type="SUPFAM" id="SSF50729">
    <property type="entry name" value="PH domain-like"/>
    <property type="match status" value="1"/>
</dbReference>
<reference key="1">
    <citation type="journal article" date="2004" name="Nature">
        <title>Genome evolution in yeasts.</title>
        <authorList>
            <person name="Dujon B."/>
            <person name="Sherman D."/>
            <person name="Fischer G."/>
            <person name="Durrens P."/>
            <person name="Casaregola S."/>
            <person name="Lafontaine I."/>
            <person name="de Montigny J."/>
            <person name="Marck C."/>
            <person name="Neuveglise C."/>
            <person name="Talla E."/>
            <person name="Goffard N."/>
            <person name="Frangeul L."/>
            <person name="Aigle M."/>
            <person name="Anthouard V."/>
            <person name="Babour A."/>
            <person name="Barbe V."/>
            <person name="Barnay S."/>
            <person name="Blanchin S."/>
            <person name="Beckerich J.-M."/>
            <person name="Beyne E."/>
            <person name="Bleykasten C."/>
            <person name="Boisrame A."/>
            <person name="Boyer J."/>
            <person name="Cattolico L."/>
            <person name="Confanioleri F."/>
            <person name="de Daruvar A."/>
            <person name="Despons L."/>
            <person name="Fabre E."/>
            <person name="Fairhead C."/>
            <person name="Ferry-Dumazet H."/>
            <person name="Groppi A."/>
            <person name="Hantraye F."/>
            <person name="Hennequin C."/>
            <person name="Jauniaux N."/>
            <person name="Joyet P."/>
            <person name="Kachouri R."/>
            <person name="Kerrest A."/>
            <person name="Koszul R."/>
            <person name="Lemaire M."/>
            <person name="Lesur I."/>
            <person name="Ma L."/>
            <person name="Muller H."/>
            <person name="Nicaud J.-M."/>
            <person name="Nikolski M."/>
            <person name="Oztas S."/>
            <person name="Ozier-Kalogeropoulos O."/>
            <person name="Pellenz S."/>
            <person name="Potier S."/>
            <person name="Richard G.-F."/>
            <person name="Straub M.-L."/>
            <person name="Suleau A."/>
            <person name="Swennen D."/>
            <person name="Tekaia F."/>
            <person name="Wesolowski-Louvel M."/>
            <person name="Westhof E."/>
            <person name="Wirth B."/>
            <person name="Zeniou-Meyer M."/>
            <person name="Zivanovic Y."/>
            <person name="Bolotin-Fukuhara M."/>
            <person name="Thierry A."/>
            <person name="Bouchier C."/>
            <person name="Caudron B."/>
            <person name="Scarpelli C."/>
            <person name="Gaillardin C."/>
            <person name="Weissenbach J."/>
            <person name="Wincker P."/>
            <person name="Souciet J.-L."/>
        </authorList>
    </citation>
    <scope>NUCLEOTIDE SEQUENCE [LARGE SCALE GENOMIC DNA]</scope>
    <source>
        <strain>ATCC 8585 / CBS 2359 / DSM 70799 / NBRC 1267 / NRRL Y-1140 / WM37</strain>
    </source>
</reference>
<proteinExistence type="inferred from homology"/>
<accession>Q6CNM8</accession>
<protein>
    <recommendedName>
        <fullName>Exocyst complex component EXO84</fullName>
    </recommendedName>
</protein>
<keyword id="KW-0175">Coiled coil</keyword>
<keyword id="KW-0968">Cytoplasmic vesicle</keyword>
<keyword id="KW-0268">Exocytosis</keyword>
<keyword id="KW-1017">Isopeptide bond</keyword>
<keyword id="KW-0653">Protein transport</keyword>
<keyword id="KW-1185">Reference proteome</keyword>
<keyword id="KW-0813">Transport</keyword>
<keyword id="KW-0832">Ubl conjugation</keyword>
<feature type="chain" id="PRO_0000118983" description="Exocyst complex component EXO84">
    <location>
        <begin position="1"/>
        <end position="720"/>
    </location>
</feature>
<feature type="region of interest" description="Disordered" evidence="3">
    <location>
        <begin position="1"/>
        <end position="63"/>
    </location>
</feature>
<feature type="region of interest" description="Disordered" evidence="3">
    <location>
        <begin position="243"/>
        <end position="275"/>
    </location>
</feature>
<feature type="region of interest" description="Disordered" evidence="3">
    <location>
        <begin position="434"/>
        <end position="470"/>
    </location>
</feature>
<feature type="coiled-coil region" evidence="2">
    <location>
        <begin position="168"/>
        <end position="252"/>
    </location>
</feature>
<feature type="compositionally biased region" description="Polar residues" evidence="3">
    <location>
        <begin position="26"/>
        <end position="36"/>
    </location>
</feature>
<feature type="compositionally biased region" description="Basic and acidic residues" evidence="3">
    <location>
        <begin position="37"/>
        <end position="58"/>
    </location>
</feature>
<feature type="compositionally biased region" description="Polar residues" evidence="3">
    <location>
        <begin position="243"/>
        <end position="252"/>
    </location>
</feature>
<feature type="compositionally biased region" description="Low complexity" evidence="3">
    <location>
        <begin position="253"/>
        <end position="265"/>
    </location>
</feature>
<feature type="compositionally biased region" description="Polar residues" evidence="3">
    <location>
        <begin position="434"/>
        <end position="447"/>
    </location>
</feature>
<feature type="cross-link" description="Glycyl lysine isopeptide (Lys-Gly) (interchain with G-Cter in ubiquitin)" evidence="1">
    <location>
        <position position="188"/>
    </location>
</feature>
<organism>
    <name type="scientific">Kluyveromyces lactis (strain ATCC 8585 / CBS 2359 / DSM 70799 / NBRC 1267 / NRRL Y-1140 / WM37)</name>
    <name type="common">Yeast</name>
    <name type="synonym">Candida sphaerica</name>
    <dbReference type="NCBI Taxonomy" id="284590"/>
    <lineage>
        <taxon>Eukaryota</taxon>
        <taxon>Fungi</taxon>
        <taxon>Dikarya</taxon>
        <taxon>Ascomycota</taxon>
        <taxon>Saccharomycotina</taxon>
        <taxon>Saccharomycetes</taxon>
        <taxon>Saccharomycetales</taxon>
        <taxon>Saccharomycetaceae</taxon>
        <taxon>Kluyveromyces</taxon>
    </lineage>
</organism>
<sequence length="720" mass="81770">MVDFSLKKHGVSSWGRGSLSRKESSAGDSSSTFKSSRYQDMKVSDPELPKVSAKERSKAGTMMKRRLSVHQSNNFGAVKMDFDNMPALPSSAADYSFASNVGNATQTSLITEDQLPDRNTSLASLNTNTRRPDQELYSSKSLRQILSNPDFKAKKFITEKLGDATAVDIDQFTSNLNDLSLEIQDEIKFNIDKSFKEILIVNKGLETATTELKVLRTKVQEMKDIMNQFVTIAEKKLQAEQAANETADLNRTSSSASLSNHSLLPPLKPTPSATRKDRTSVYILERMWNEELMTLFKNVDGAHKYITSTPGRHILLESDNWIEINPATLKPLQKVRLFILNDVVLIAAPKPSKQTELTVSRFSPLRDVTVEVQSEHELSFNFSNKQHTLYRHRDPQVFSKVIDIIRQAKDALREISQAEEDTTRKIRNSYTLLQQERTPNRDATTSPVKVHGRQRSYGGTGTPSRHRSDAQNDALLTNITRSIHVRMGSEETTEVTKRLKRLDDALEDLDLEIGRQNFDLAITKLNHIQSSLKSLYSSATFDESVMVELLSLKCSQRKTILYTKLTNLLACETSDMTKLKSYMLNLVALNEPVDALEVFLQNRSNFINDLTLQIGIIDNVTSFITQVAIIRFQTLKKVTQQYLEVSKNLKRDYTSLLVCWCSEEVDKHFQLMERELSNSSTLSVQAIKITRKQIDELKPVGMDYVYKLDDFIRRNNNRIL</sequence>
<name>EXO84_KLULA</name>
<evidence type="ECO:0000250" key="1"/>
<evidence type="ECO:0000255" key="2"/>
<evidence type="ECO:0000256" key="3">
    <source>
        <dbReference type="SAM" id="MobiDB-lite"/>
    </source>
</evidence>
<evidence type="ECO:0000305" key="4"/>
<comment type="function">
    <text evidence="1">Involved in the secretory pathway as part of the exocyst complex which tethers secretory vesicles to the sites of exocytosis. Plays a role in both the assembly of the exocyst and the polarization of this complex to specific sites of the plasma membrane for exocytosis. Also involved in assembly of the spliceosome (By similarity).</text>
</comment>
<comment type="subunit">
    <text evidence="1">Component of the exocyst complex.</text>
</comment>
<comment type="subcellular location">
    <subcellularLocation>
        <location evidence="1">Cytoplasmic vesicle</location>
        <location evidence="1">Secretory vesicle</location>
    </subcellularLocation>
    <text evidence="1">Cell periphery. The polarization of EXO84 requires actin cables (By similarity).</text>
</comment>
<comment type="similarity">
    <text evidence="4">Belongs to the EXO84 family.</text>
</comment>